<evidence type="ECO:0000255" key="1">
    <source>
        <dbReference type="HAMAP-Rule" id="MF_00514"/>
    </source>
</evidence>
<evidence type="ECO:0000256" key="2">
    <source>
        <dbReference type="SAM" id="MobiDB-lite"/>
    </source>
</evidence>
<evidence type="ECO:0000305" key="3"/>
<accession>B0UU76</accession>
<protein>
    <recommendedName>
        <fullName evidence="1">Large ribosomal subunit protein bL35</fullName>
    </recommendedName>
    <alternativeName>
        <fullName evidence="3">50S ribosomal protein L35</fullName>
    </alternativeName>
</protein>
<gene>
    <name evidence="1" type="primary">rpmI</name>
    <name type="ordered locus">HSM_1355</name>
</gene>
<organism>
    <name type="scientific">Histophilus somni (strain 2336)</name>
    <name type="common">Haemophilus somnus</name>
    <dbReference type="NCBI Taxonomy" id="228400"/>
    <lineage>
        <taxon>Bacteria</taxon>
        <taxon>Pseudomonadati</taxon>
        <taxon>Pseudomonadota</taxon>
        <taxon>Gammaproteobacteria</taxon>
        <taxon>Pasteurellales</taxon>
        <taxon>Pasteurellaceae</taxon>
        <taxon>Histophilus</taxon>
    </lineage>
</organism>
<keyword id="KW-0687">Ribonucleoprotein</keyword>
<keyword id="KW-0689">Ribosomal protein</keyword>
<feature type="chain" id="PRO_1000081612" description="Large ribosomal subunit protein bL35">
    <location>
        <begin position="1"/>
        <end position="65"/>
    </location>
</feature>
<feature type="region of interest" description="Disordered" evidence="2">
    <location>
        <begin position="1"/>
        <end position="26"/>
    </location>
</feature>
<feature type="compositionally biased region" description="Basic residues" evidence="2">
    <location>
        <begin position="10"/>
        <end position="26"/>
    </location>
</feature>
<proteinExistence type="inferred from homology"/>
<name>RL35_HISS2</name>
<dbReference type="EMBL" id="CP000947">
    <property type="protein sequence ID" value="ACA31091.1"/>
    <property type="molecule type" value="Genomic_DNA"/>
</dbReference>
<dbReference type="RefSeq" id="WP_011609029.1">
    <property type="nucleotide sequence ID" value="NC_010519.1"/>
</dbReference>
<dbReference type="SMR" id="B0UU76"/>
<dbReference type="STRING" id="228400.HSM_1355"/>
<dbReference type="GeneID" id="31487653"/>
<dbReference type="KEGG" id="hsm:HSM_1355"/>
<dbReference type="HOGENOM" id="CLU_169643_1_1_6"/>
<dbReference type="GO" id="GO:0022625">
    <property type="term" value="C:cytosolic large ribosomal subunit"/>
    <property type="evidence" value="ECO:0007669"/>
    <property type="project" value="TreeGrafter"/>
</dbReference>
<dbReference type="GO" id="GO:0003735">
    <property type="term" value="F:structural constituent of ribosome"/>
    <property type="evidence" value="ECO:0007669"/>
    <property type="project" value="InterPro"/>
</dbReference>
<dbReference type="GO" id="GO:0006412">
    <property type="term" value="P:translation"/>
    <property type="evidence" value="ECO:0007669"/>
    <property type="project" value="UniProtKB-UniRule"/>
</dbReference>
<dbReference type="FunFam" id="4.10.410.60:FF:000001">
    <property type="entry name" value="50S ribosomal protein L35"/>
    <property type="match status" value="1"/>
</dbReference>
<dbReference type="Gene3D" id="4.10.410.60">
    <property type="match status" value="1"/>
</dbReference>
<dbReference type="HAMAP" id="MF_00514">
    <property type="entry name" value="Ribosomal_bL35"/>
    <property type="match status" value="1"/>
</dbReference>
<dbReference type="InterPro" id="IPR001706">
    <property type="entry name" value="Ribosomal_bL35"/>
</dbReference>
<dbReference type="InterPro" id="IPR021137">
    <property type="entry name" value="Ribosomal_bL35-like"/>
</dbReference>
<dbReference type="InterPro" id="IPR018265">
    <property type="entry name" value="Ribosomal_bL35_CS"/>
</dbReference>
<dbReference type="InterPro" id="IPR037229">
    <property type="entry name" value="Ribosomal_bL35_sf"/>
</dbReference>
<dbReference type="NCBIfam" id="TIGR00001">
    <property type="entry name" value="rpmI_bact"/>
    <property type="match status" value="1"/>
</dbReference>
<dbReference type="PANTHER" id="PTHR33343">
    <property type="entry name" value="54S RIBOSOMAL PROTEIN BL35M"/>
    <property type="match status" value="1"/>
</dbReference>
<dbReference type="PANTHER" id="PTHR33343:SF1">
    <property type="entry name" value="LARGE RIBOSOMAL SUBUNIT PROTEIN BL35M"/>
    <property type="match status" value="1"/>
</dbReference>
<dbReference type="Pfam" id="PF01632">
    <property type="entry name" value="Ribosomal_L35p"/>
    <property type="match status" value="1"/>
</dbReference>
<dbReference type="PRINTS" id="PR00064">
    <property type="entry name" value="RIBOSOMALL35"/>
</dbReference>
<dbReference type="SUPFAM" id="SSF143034">
    <property type="entry name" value="L35p-like"/>
    <property type="match status" value="1"/>
</dbReference>
<dbReference type="PROSITE" id="PS00936">
    <property type="entry name" value="RIBOSOMAL_L35"/>
    <property type="match status" value="1"/>
</dbReference>
<comment type="similarity">
    <text evidence="1">Belongs to the bacterial ribosomal protein bL35 family.</text>
</comment>
<sequence>MPKIKTLRGAAKRFKKTASGGFKRKQSHLRHILTKKTTKRKRHLRHKSMVAKADQVLVVACLPYA</sequence>
<reference key="1">
    <citation type="submission" date="2008-02" db="EMBL/GenBank/DDBJ databases">
        <title>Complete sequence of Haemophilus somnus 2336.</title>
        <authorList>
            <consortium name="US DOE Joint Genome Institute"/>
            <person name="Siddaramappa S."/>
            <person name="Duncan A.J."/>
            <person name="Challacombe J.F."/>
            <person name="Rainey D."/>
            <person name="Gillaspy A.F."/>
            <person name="Carson M."/>
            <person name="Gipson J."/>
            <person name="Gipson M."/>
            <person name="Bruce D."/>
            <person name="Detter J.C."/>
            <person name="Han C.S."/>
            <person name="Land M."/>
            <person name="Tapia R."/>
            <person name="Thompson L.S."/>
            <person name="Orvis J."/>
            <person name="Zaitshik J."/>
            <person name="Barnes G."/>
            <person name="Brettin T.S."/>
            <person name="Dyer D.W."/>
            <person name="Inzana T.J."/>
        </authorList>
    </citation>
    <scope>NUCLEOTIDE SEQUENCE [LARGE SCALE GENOMIC DNA]</scope>
    <source>
        <strain>2336</strain>
    </source>
</reference>